<accession>G8JZS6</accession>
<accession>Q45771</accession>
<accession>Q7C3Z4</accession>
<protein>
    <recommendedName>
        <fullName>Outer membrane protein SusF</fullName>
    </recommendedName>
    <alternativeName>
        <fullName>Starch-utilization system protein F</fullName>
    </alternativeName>
</protein>
<dbReference type="EMBL" id="L77733">
    <property type="protein sequence ID" value="AAB42173.1"/>
    <property type="molecule type" value="Genomic_DNA"/>
</dbReference>
<dbReference type="EMBL" id="AE015928">
    <property type="protein sequence ID" value="AAO78804.1"/>
    <property type="molecule type" value="Genomic_DNA"/>
</dbReference>
<dbReference type="RefSeq" id="NP_812610.1">
    <property type="nucleotide sequence ID" value="NC_004663.1"/>
</dbReference>
<dbReference type="RefSeq" id="WP_008767007.1">
    <property type="nucleotide sequence ID" value="NC_004663.1"/>
</dbReference>
<dbReference type="PDB" id="4FE9">
    <property type="method" value="X-ray"/>
    <property type="resolution" value="2.00 A"/>
    <property type="chains" value="A=21-485"/>
</dbReference>
<dbReference type="PDBsum" id="4FE9"/>
<dbReference type="SMR" id="G8JZS6"/>
<dbReference type="STRING" id="226186.BT_3699"/>
<dbReference type="TCDB" id="1.B.38.4.2">
    <property type="family name" value="the treponema porin major surface protein (tp-msp) family"/>
</dbReference>
<dbReference type="PaxDb" id="226186-BT_3699"/>
<dbReference type="DNASU" id="1072051"/>
<dbReference type="EnsemblBacteria" id="AAO78804">
    <property type="protein sequence ID" value="AAO78804"/>
    <property type="gene ID" value="BT_3699"/>
</dbReference>
<dbReference type="GeneID" id="60924868"/>
<dbReference type="KEGG" id="bth:BT_3699"/>
<dbReference type="PATRIC" id="fig|226186.12.peg.3759"/>
<dbReference type="eggNOG" id="ENOG5033Q7G">
    <property type="taxonomic scope" value="Bacteria"/>
</dbReference>
<dbReference type="HOGENOM" id="CLU_042892_1_0_10"/>
<dbReference type="InParanoid" id="G8JZS6"/>
<dbReference type="OrthoDB" id="975117at2"/>
<dbReference type="UniPathway" id="UPA00153"/>
<dbReference type="EvolutionaryTrace" id="G8JZS6"/>
<dbReference type="Proteomes" id="UP000001414">
    <property type="component" value="Chromosome"/>
</dbReference>
<dbReference type="GO" id="GO:0009279">
    <property type="term" value="C:cell outer membrane"/>
    <property type="evidence" value="ECO:0000314"/>
    <property type="project" value="UniProtKB"/>
</dbReference>
<dbReference type="GO" id="GO:0019867">
    <property type="term" value="C:outer membrane"/>
    <property type="evidence" value="ECO:0000314"/>
    <property type="project" value="MENGO"/>
</dbReference>
<dbReference type="GO" id="GO:2001070">
    <property type="term" value="F:starch binding"/>
    <property type="evidence" value="ECO:0000314"/>
    <property type="project" value="UniProtKB"/>
</dbReference>
<dbReference type="GO" id="GO:0005983">
    <property type="term" value="P:starch catabolic process"/>
    <property type="evidence" value="ECO:0007669"/>
    <property type="project" value="UniProtKB-UniPathway"/>
</dbReference>
<dbReference type="GO" id="GO:0005982">
    <property type="term" value="P:starch metabolic process"/>
    <property type="evidence" value="ECO:0000314"/>
    <property type="project" value="UniProtKB"/>
</dbReference>
<dbReference type="CDD" id="cd12965">
    <property type="entry name" value="CBM-Eb_CBM-Fb"/>
    <property type="match status" value="1"/>
</dbReference>
<dbReference type="CDD" id="cd12966">
    <property type="entry name" value="CBM-Ec_CBM-Fc"/>
    <property type="match status" value="1"/>
</dbReference>
<dbReference type="CDD" id="cd12964">
    <property type="entry name" value="CBM-Fa"/>
    <property type="match status" value="1"/>
</dbReference>
<dbReference type="Gene3D" id="2.60.40.3610">
    <property type="match status" value="1"/>
</dbReference>
<dbReference type="Gene3D" id="2.60.40.3620">
    <property type="match status" value="2"/>
</dbReference>
<dbReference type="Gene3D" id="2.60.40.3640">
    <property type="match status" value="1"/>
</dbReference>
<dbReference type="InterPro" id="IPR032187">
    <property type="entry name" value="SusF/SusE-like_C"/>
</dbReference>
<dbReference type="InterPro" id="IPR033408">
    <property type="entry name" value="SusF_N"/>
</dbReference>
<dbReference type="Pfam" id="PF17142">
    <property type="entry name" value="SusF_N"/>
    <property type="match status" value="1"/>
</dbReference>
<dbReference type="Pfam" id="PF16411">
    <property type="entry name" value="SusF_SusE"/>
    <property type="match status" value="1"/>
</dbReference>
<dbReference type="PROSITE" id="PS51257">
    <property type="entry name" value="PROKAR_LIPOPROTEIN"/>
    <property type="match status" value="1"/>
</dbReference>
<organism>
    <name type="scientific">Bacteroides thetaiotaomicron (strain ATCC 29148 / DSM 2079 / JCM 5827 / CCUG 10774 / NCTC 10582 / VPI-5482 / E50)</name>
    <dbReference type="NCBI Taxonomy" id="226186"/>
    <lineage>
        <taxon>Bacteria</taxon>
        <taxon>Pseudomonadati</taxon>
        <taxon>Bacteroidota</taxon>
        <taxon>Bacteroidia</taxon>
        <taxon>Bacteroidales</taxon>
        <taxon>Bacteroidaceae</taxon>
        <taxon>Bacteroides</taxon>
    </lineage>
</organism>
<comment type="function">
    <text evidence="2 3 4">Starch-binding protein present at the surface of the cell. Mediates starch-binding before starch transport in the periplasm for degradation. SusE and SusF do not constitute the major starch-binding proteins in starch degradation pathway. Has lower affinity for starch compared to SusE.</text>
</comment>
<comment type="pathway">
    <text>Glycan degradation; starch degradation.</text>
</comment>
<comment type="subunit">
    <text evidence="3 4 6">Monomer (Probable). Interacts with SusE.</text>
</comment>
<comment type="subcellular location">
    <subcellularLocation>
        <location evidence="4">Cell outer membrane</location>
        <topology evidence="1 4">Lipid-anchor</topology>
    </subcellularLocation>
</comment>
<comment type="induction">
    <text evidence="5">By maltose.</text>
</comment>
<comment type="domain">
    <text evidence="4">The carbohydrate binding modules (CBM) mediate starch-binding.</text>
</comment>
<comment type="similarity">
    <text evidence="6">Belongs to the SusF family.</text>
</comment>
<name>SUSF_BACTN</name>
<keyword id="KW-0002">3D-structure</keyword>
<keyword id="KW-0119">Carbohydrate metabolism</keyword>
<keyword id="KW-0998">Cell outer membrane</keyword>
<keyword id="KW-0449">Lipoprotein</keyword>
<keyword id="KW-0472">Membrane</keyword>
<keyword id="KW-0564">Palmitate</keyword>
<keyword id="KW-1185">Reference proteome</keyword>
<keyword id="KW-0732">Signal</keyword>
<proteinExistence type="evidence at protein level"/>
<evidence type="ECO:0000255" key="1">
    <source>
        <dbReference type="PROSITE-ProRule" id="PRU00303"/>
    </source>
</evidence>
<evidence type="ECO:0000269" key="2">
    <source>
    </source>
</evidence>
<evidence type="ECO:0000269" key="3">
    <source>
    </source>
</evidence>
<evidence type="ECO:0000269" key="4">
    <source>
    </source>
</evidence>
<evidence type="ECO:0000269" key="5">
    <source>
    </source>
</evidence>
<evidence type="ECO:0000305" key="6"/>
<evidence type="ECO:0000305" key="7">
    <source>
    </source>
</evidence>
<evidence type="ECO:0007829" key="8">
    <source>
        <dbReference type="PDB" id="4FE9"/>
    </source>
</evidence>
<reference key="1">
    <citation type="journal article" date="1997" name="J. Bacteriol.">
        <title>Characterization of four outer membrane proteins that play a role in utilization of starch by Bacteroides thetaiotaomicron.</title>
        <authorList>
            <person name="Reeves A.R."/>
            <person name="Wang G.R."/>
            <person name="Salyers A.A."/>
        </authorList>
    </citation>
    <scope>NUCLEOTIDE SEQUENCE [GENOMIC DNA]</scope>
    <scope>INDUCTION</scope>
    <source>
        <strain>ATCC 29148 / DSM 2079 / JCM 5827 / CCUG 10774 / NCTC 10582 / VPI-5482 / E50</strain>
    </source>
</reference>
<reference key="2">
    <citation type="journal article" date="2003" name="Science">
        <title>A genomic view of the human-Bacteroides thetaiotaomicron symbiosis.</title>
        <authorList>
            <person name="Xu J."/>
            <person name="Bjursell M.K."/>
            <person name="Himrod J."/>
            <person name="Deng S."/>
            <person name="Carmichael L.K."/>
            <person name="Chiang H.C."/>
            <person name="Hooper L.V."/>
            <person name="Gordon J.I."/>
        </authorList>
    </citation>
    <scope>NUCLEOTIDE SEQUENCE [LARGE SCALE GENOMIC DNA]</scope>
    <source>
        <strain>ATCC 29148 / DSM 2079 / JCM 5827 / CCUG 10774 / NCTC 10582 / VPI-5482 / E50</strain>
    </source>
</reference>
<reference key="3">
    <citation type="journal article" date="2001" name="J. Bacteriol.">
        <title>Biochemical analysis of interactions between outer membrane proteins that contribute to starch utilization by Bacteroides thetaiotaomicron.</title>
        <authorList>
            <person name="Cho K.H."/>
            <person name="Salyers A.A."/>
        </authorList>
    </citation>
    <scope>FUNCTION</scope>
    <scope>INTERACTION WITH SUSF</scope>
    <source>
        <strain>ATCC 29148 / DSM 2079 / JCM 5827 / CCUG 10774 / NCTC 10582 / VPI-5482 / E50</strain>
    </source>
</reference>
<reference key="4">
    <citation type="journal article" date="2000" name="J. Bacteriol.">
        <title>Characterization of four outer membrane proteins involved in binding starch to the cell surface of Bacteroides thetaiotaomicron.</title>
        <authorList>
            <person name="Shipman J.A."/>
            <person name="Berleman J.E."/>
            <person name="Salyers A.A."/>
        </authorList>
    </citation>
    <scope>FUNCTION</scope>
    <scope>STARCH-BINDING</scope>
    <source>
        <strain>ATCC 29148 / DSM 2079 / JCM 5827 / CCUG 10774 / NCTC 10582 / VPI-5482 / E50</strain>
    </source>
</reference>
<reference key="5">
    <citation type="journal article" date="2012" name="J. Biol. Chem.">
        <title>Multidomain carbohydrate-binding proteins involved in bacteroides thetaiotaomicron starch metabolism.</title>
        <authorList>
            <person name="Cameron E.A."/>
            <person name="Maynard M.A."/>
            <person name="Smith C.J."/>
            <person name="Smith T.J."/>
            <person name="Koropatkin N.M."/>
            <person name="Martens E.C."/>
        </authorList>
    </citation>
    <scope>X-RAY CRYSTALLOGRAPHY (2.00 ANGSTROMS) OF 21-485 IN COMPLEX WITH ALPHA-D-GLUCOSE</scope>
    <scope>FUNCTION</scope>
    <scope>SUBCELLULAR LOCATION</scope>
    <scope>SUBUNIT</scope>
    <scope>STARCH-BINDING</scope>
    <scope>DIACYLGLYCEROL AT CYS-20</scope>
    <scope>PALMITOYLATION AT CYS-20</scope>
    <scope>MUTAGENESIS OF CYS-20; TRP-177; LYS-208; TRP-222; ASP-231; TRP-287; LYS-323; ASN-356; TRP-396; TRP-442 AND ARG-456</scope>
</reference>
<gene>
    <name type="primary">susF</name>
    <name type="ordered locus">BT_3699</name>
</gene>
<feature type="signal peptide" evidence="1">
    <location>
        <begin position="1"/>
        <end position="19"/>
    </location>
</feature>
<feature type="chain" id="PRO_0000425890" description="Outer membrane protein SusF">
    <location>
        <begin position="20"/>
        <end position="485"/>
    </location>
</feature>
<feature type="region of interest" description="Carbohydrate binding module (CBM) 1">
    <location>
        <begin position="161"/>
        <end position="274"/>
    </location>
</feature>
<feature type="region of interest" description="Carbohydrate binding module (CBM) 2">
    <location>
        <begin position="275"/>
        <end position="383"/>
    </location>
</feature>
<feature type="region of interest" description="Carbohydrate binding module (CBM) 3">
    <location>
        <begin position="384"/>
        <end position="485"/>
    </location>
</feature>
<feature type="binding site">
    <location>
        <position position="173"/>
    </location>
    <ligand>
        <name>D-glucose</name>
        <dbReference type="ChEBI" id="CHEBI:4167"/>
    </ligand>
</feature>
<feature type="binding site">
    <location>
        <begin position="206"/>
        <end position="208"/>
    </location>
    <ligand>
        <name>D-glucose</name>
        <dbReference type="ChEBI" id="CHEBI:4167"/>
    </ligand>
</feature>
<feature type="binding site">
    <location>
        <position position="231"/>
    </location>
    <ligand>
        <name>D-glucose</name>
        <dbReference type="ChEBI" id="CHEBI:4167"/>
    </ligand>
</feature>
<feature type="lipid moiety-binding region" description="N-palmitoyl cysteine" evidence="7">
    <location>
        <position position="20"/>
    </location>
</feature>
<feature type="lipid moiety-binding region" description="S-diacylglycerol cysteine" evidence="7">
    <location>
        <position position="20"/>
    </location>
</feature>
<feature type="mutagenesis site" description="Abolishes cell outer membrane localization." evidence="4">
    <original>C</original>
    <variation>A</variation>
    <location>
        <position position="20"/>
    </location>
</feature>
<feature type="mutagenesis site" description="Abolished binding to starch; when associated with A-208; A-222; A-231; A-287; A-323; A-356; A-396; A-442 and A-456." evidence="4">
    <original>W</original>
    <variation>A</variation>
    <location>
        <position position="177"/>
    </location>
</feature>
<feature type="mutagenesis site" description="Abolished binding to starch; when associated with A-177; A-222; A-231; A-287; A-323; A-356; A-396; A-442 and A-456." evidence="4">
    <original>K</original>
    <variation>A</variation>
    <location>
        <position position="208"/>
    </location>
</feature>
<feature type="mutagenesis site" description="Abolished binding to starch; when associated with A-177; A-208; A-231; A-287; A-323; A-356; A-396; A-442 and A-456." evidence="4">
    <original>W</original>
    <variation>A</variation>
    <location>
        <position position="222"/>
    </location>
</feature>
<feature type="mutagenesis site" description="Abolished binding to starch; when associated with A-177; A-208; A-222; A-287; A-323; A-356; A-396; A-442 and A-456." evidence="4">
    <original>D</original>
    <variation>A</variation>
    <location>
        <position position="231"/>
    </location>
</feature>
<feature type="mutagenesis site" description="Abolished binding to starch; when associated with A-177; A-208; A-222; A-231; A-323; A-356; A-396; A-442 and A-456." evidence="4">
    <original>W</original>
    <variation>A</variation>
    <location>
        <position position="287"/>
    </location>
</feature>
<feature type="mutagenesis site" description="Abolished binding to starch; when associated with A-177; A-208; A-222; A-231; A-287; A-356; A-396; A-442 and A-456." evidence="4">
    <original>K</original>
    <variation>A</variation>
    <location>
        <position position="323"/>
    </location>
</feature>
<feature type="mutagenesis site" description="Abolished binding to starch; when associated with A-177; A-208; A-222; A-231; A-287; A-323; A-396; A-442 and A-456." evidence="4">
    <original>N</original>
    <variation>A</variation>
    <location>
        <position position="356"/>
    </location>
</feature>
<feature type="mutagenesis site" description="Abolished binding to starch; when associated with A-177; A-208; A-222; A-231; A-287; A-323; A-356; A-442 and A-456." evidence="4">
    <original>W</original>
    <variation>A</variation>
    <location>
        <position position="396"/>
    </location>
</feature>
<feature type="mutagenesis site" description="Abolished binding to starch; when associated with A-177; A-208; A-222; A-231; A-287; A-323; A-356; A-396; and A-456." evidence="4">
    <original>W</original>
    <variation>A</variation>
    <location>
        <position position="442"/>
    </location>
</feature>
<feature type="mutagenesis site" description="Abolished binding to starch; when associated with A-287; A-323; A-356; A-396 and A-442." evidence="4">
    <original>R</original>
    <variation>A</variation>
    <location>
        <position position="456"/>
    </location>
</feature>
<feature type="strand" evidence="8">
    <location>
        <begin position="42"/>
        <end position="48"/>
    </location>
</feature>
<feature type="strand" evidence="8">
    <location>
        <begin position="53"/>
        <end position="55"/>
    </location>
</feature>
<feature type="helix" evidence="8">
    <location>
        <begin position="56"/>
        <end position="58"/>
    </location>
</feature>
<feature type="strand" evidence="8">
    <location>
        <begin position="62"/>
        <end position="74"/>
    </location>
</feature>
<feature type="strand" evidence="8">
    <location>
        <begin position="79"/>
        <end position="87"/>
    </location>
</feature>
<feature type="turn" evidence="8">
    <location>
        <begin position="88"/>
        <end position="90"/>
    </location>
</feature>
<feature type="strand" evidence="8">
    <location>
        <begin position="102"/>
        <end position="106"/>
    </location>
</feature>
<feature type="helix" evidence="8">
    <location>
        <begin position="107"/>
        <end position="117"/>
    </location>
</feature>
<feature type="strand" evidence="8">
    <location>
        <begin position="126"/>
        <end position="137"/>
    </location>
</feature>
<feature type="strand" evidence="8">
    <location>
        <begin position="143"/>
        <end position="147"/>
    </location>
</feature>
<feature type="strand" evidence="8">
    <location>
        <begin position="151"/>
        <end position="156"/>
    </location>
</feature>
<feature type="strand" evidence="8">
    <location>
        <begin position="168"/>
        <end position="172"/>
    </location>
</feature>
<feature type="turn" evidence="8">
    <location>
        <begin position="173"/>
        <end position="175"/>
    </location>
</feature>
<feature type="helix" evidence="8">
    <location>
        <begin position="179"/>
        <end position="181"/>
    </location>
</feature>
<feature type="strand" evidence="8">
    <location>
        <begin position="194"/>
        <end position="203"/>
    </location>
</feature>
<feature type="strand" evidence="8">
    <location>
        <begin position="206"/>
        <end position="211"/>
    </location>
</feature>
<feature type="helix" evidence="8">
    <location>
        <begin position="212"/>
        <end position="214"/>
    </location>
</feature>
<feature type="helix" evidence="8">
    <location>
        <begin position="222"/>
        <end position="224"/>
    </location>
</feature>
<feature type="strand" evidence="8">
    <location>
        <begin position="226"/>
        <end position="230"/>
    </location>
</feature>
<feature type="strand" evidence="8">
    <location>
        <begin position="236"/>
        <end position="239"/>
    </location>
</feature>
<feature type="strand" evidence="8">
    <location>
        <begin position="254"/>
        <end position="261"/>
    </location>
</feature>
<feature type="turn" evidence="8">
    <location>
        <begin position="262"/>
        <end position="265"/>
    </location>
</feature>
<feature type="strand" evidence="8">
    <location>
        <begin position="266"/>
        <end position="271"/>
    </location>
</feature>
<feature type="strand" evidence="8">
    <location>
        <begin position="279"/>
        <end position="282"/>
    </location>
</feature>
<feature type="helix" evidence="8">
    <location>
        <begin position="283"/>
        <end position="288"/>
    </location>
</feature>
<feature type="turn" evidence="8">
    <location>
        <begin position="294"/>
        <end position="296"/>
    </location>
</feature>
<feature type="strand" evidence="8">
    <location>
        <begin position="309"/>
        <end position="316"/>
    </location>
</feature>
<feature type="strand" evidence="8">
    <location>
        <begin position="321"/>
        <end position="332"/>
    </location>
</feature>
<feature type="helix" evidence="8">
    <location>
        <begin position="342"/>
        <end position="348"/>
    </location>
</feature>
<feature type="strand" evidence="8">
    <location>
        <begin position="351"/>
        <end position="353"/>
    </location>
</feature>
<feature type="strand" evidence="8">
    <location>
        <begin position="356"/>
        <end position="358"/>
    </location>
</feature>
<feature type="strand" evidence="8">
    <location>
        <begin position="363"/>
        <end position="372"/>
    </location>
</feature>
<feature type="strand" evidence="8">
    <location>
        <begin position="375"/>
        <end position="381"/>
    </location>
</feature>
<feature type="strand" evidence="8">
    <location>
        <begin position="386"/>
        <end position="389"/>
    </location>
</feature>
<feature type="helix" evidence="8">
    <location>
        <begin position="395"/>
        <end position="397"/>
    </location>
</feature>
<feature type="helix" evidence="8">
    <location>
        <begin position="402"/>
        <end position="404"/>
    </location>
</feature>
<feature type="strand" evidence="8">
    <location>
        <begin position="422"/>
        <end position="430"/>
    </location>
</feature>
<feature type="helix" evidence="8">
    <location>
        <begin position="438"/>
        <end position="444"/>
    </location>
</feature>
<feature type="strand" evidence="8">
    <location>
        <begin position="445"/>
        <end position="449"/>
    </location>
</feature>
<feature type="strand" evidence="8">
    <location>
        <begin position="452"/>
        <end position="455"/>
    </location>
</feature>
<feature type="strand" evidence="8">
    <location>
        <begin position="472"/>
        <end position="476"/>
    </location>
</feature>
<feature type="turn" evidence="8">
    <location>
        <begin position="477"/>
        <end position="480"/>
    </location>
</feature>
<feature type="strand" evidence="8">
    <location>
        <begin position="481"/>
        <end position="485"/>
    </location>
</feature>
<sequence>MKKHLIYTGMFLAAIGFSACNEDFKDWADPQSNPQEESAGQLTATFTAGKDASIVMDAATADSVEIAKLSSTTAEEGSKIAVNSLTLNENHTIPFSMTEDHVFKVALAQLDSVTQEAYKSRASVVRELKISINASAVTPSGEGIQLVGNEVSITLQPATTPAVDPDGYYIVGDFTGWDGNSAQQMKKDALDENLYILEAEIESTSNFKIFPASAINGNDIDWTKALGSSVDGDDSGDNFVSWTNAGAINTALDGKIKISFDAFNYRFTVKDNSAPTELYMTGSAYNWGTPAGDPNAWKALVPVNGTKGTFWGIFYFAANDQVKFAPQANWGNDFGFVDAISQESKDLAGLSDEGGNLKVGIAGWYLVYVSVIGDDKVIEFEKPNVYLMGDTSYNGWDAQLVEQDLFTVPGTADGEFVSPAFLKDGAVRICVNPKAVSAGDWWKTEFIIFDGQIAYRGNGGDQAAVQGKTGQKVYLNFGNGTGRIE</sequence>